<gene>
    <name evidence="8" type="primary">daao</name>
</gene>
<name>OXDA_DUGRY</name>
<organism>
    <name type="scientific">Dugesia ryukyuensis</name>
    <name type="common">Freshwater planarian flatworm</name>
    <dbReference type="NCBI Taxonomy" id="79738"/>
    <lineage>
        <taxon>Eukaryota</taxon>
        <taxon>Metazoa</taxon>
        <taxon>Spiralia</taxon>
        <taxon>Lophotrochozoa</taxon>
        <taxon>Platyhelminthes</taxon>
        <taxon>Rhabditophora</taxon>
        <taxon>Seriata</taxon>
        <taxon>Tricladida</taxon>
        <taxon>Continenticola</taxon>
        <taxon>Geoplanoidea</taxon>
        <taxon>Dugesiidae</taxon>
        <taxon>Dugesia</taxon>
    </lineage>
</organism>
<comment type="function">
    <text evidence="3 6">Catalyzes the oxidative deamination of D-amino acids with broad substrate specificity (By similarity). Could be responsible for the degradation of diet-derived D-alanine in the intestine (By similarity). Maintains the asexual state of worms and represses early ovarian development (PubMed:24434168). Following sexual induction, the enzyme is required for differentiation of oogonia into oocytes in the developing ovaries (PubMed:24434168).</text>
</comment>
<comment type="catalytic activity">
    <reaction evidence="6">
        <text>a D-alpha-amino acid + O2 + H2O = a 2-oxocarboxylate + H2O2 + NH4(+)</text>
        <dbReference type="Rhea" id="RHEA:21816"/>
        <dbReference type="ChEBI" id="CHEBI:15377"/>
        <dbReference type="ChEBI" id="CHEBI:15379"/>
        <dbReference type="ChEBI" id="CHEBI:16240"/>
        <dbReference type="ChEBI" id="CHEBI:28938"/>
        <dbReference type="ChEBI" id="CHEBI:35179"/>
        <dbReference type="ChEBI" id="CHEBI:59871"/>
        <dbReference type="EC" id="1.4.3.3"/>
    </reaction>
    <physiologicalReaction direction="left-to-right" evidence="6">
        <dbReference type="Rhea" id="RHEA:21817"/>
    </physiologicalReaction>
</comment>
<comment type="catalytic activity">
    <reaction evidence="6">
        <text>D-alanine + O2 + H2O = pyruvate + H2O2 + NH4(+)</text>
        <dbReference type="Rhea" id="RHEA:22688"/>
        <dbReference type="ChEBI" id="CHEBI:15361"/>
        <dbReference type="ChEBI" id="CHEBI:15377"/>
        <dbReference type="ChEBI" id="CHEBI:15379"/>
        <dbReference type="ChEBI" id="CHEBI:16240"/>
        <dbReference type="ChEBI" id="CHEBI:28938"/>
        <dbReference type="ChEBI" id="CHEBI:57416"/>
    </reaction>
    <physiologicalReaction direction="left-to-right" evidence="6">
        <dbReference type="Rhea" id="RHEA:22689"/>
    </physiologicalReaction>
</comment>
<comment type="catalytic activity">
    <reaction evidence="6">
        <text>D-arginine + O2 + H2O = 5-guanidino-2-oxopentanoate + H2O2 + NH4(+)</text>
        <dbReference type="Rhea" id="RHEA:78219"/>
        <dbReference type="ChEBI" id="CHEBI:15377"/>
        <dbReference type="ChEBI" id="CHEBI:15379"/>
        <dbReference type="ChEBI" id="CHEBI:16240"/>
        <dbReference type="ChEBI" id="CHEBI:28938"/>
        <dbReference type="ChEBI" id="CHEBI:32689"/>
        <dbReference type="ChEBI" id="CHEBI:58489"/>
    </reaction>
    <physiologicalReaction direction="left-to-right" evidence="6">
        <dbReference type="Rhea" id="RHEA:78220"/>
    </physiologicalReaction>
</comment>
<comment type="catalytic activity">
    <reaction evidence="6">
        <text>D-asparagine + O2 + H2O = 2-oxosuccinamate + H2O2 + NH4(+)</text>
        <dbReference type="Rhea" id="RHEA:78243"/>
        <dbReference type="ChEBI" id="CHEBI:15377"/>
        <dbReference type="ChEBI" id="CHEBI:15379"/>
        <dbReference type="ChEBI" id="CHEBI:16240"/>
        <dbReference type="ChEBI" id="CHEBI:28938"/>
        <dbReference type="ChEBI" id="CHEBI:57735"/>
        <dbReference type="ChEBI" id="CHEBI:74337"/>
    </reaction>
    <physiologicalReaction direction="left-to-right" evidence="6">
        <dbReference type="Rhea" id="RHEA:78244"/>
    </physiologicalReaction>
</comment>
<comment type="catalytic activity">
    <reaction evidence="6">
        <text>D-cysteine + O2 + H2O = 2-oxo-3-sulfanylpropanoate + H2O2 + NH4(+)</text>
        <dbReference type="Rhea" id="RHEA:78791"/>
        <dbReference type="ChEBI" id="CHEBI:15377"/>
        <dbReference type="ChEBI" id="CHEBI:15379"/>
        <dbReference type="ChEBI" id="CHEBI:16240"/>
        <dbReference type="ChEBI" id="CHEBI:28938"/>
        <dbReference type="ChEBI" id="CHEBI:35236"/>
        <dbReference type="ChEBI" id="CHEBI:57678"/>
    </reaction>
    <physiologicalReaction direction="left-to-right" evidence="6">
        <dbReference type="Rhea" id="RHEA:78792"/>
    </physiologicalReaction>
</comment>
<comment type="catalytic activity">
    <reaction evidence="6">
        <text>D-glutamine + O2 + H2O = 2-oxoglutaramate + H2O2 + NH4(+)</text>
        <dbReference type="Rhea" id="RHEA:78215"/>
        <dbReference type="ChEBI" id="CHEBI:15377"/>
        <dbReference type="ChEBI" id="CHEBI:15379"/>
        <dbReference type="ChEBI" id="CHEBI:16240"/>
        <dbReference type="ChEBI" id="CHEBI:16769"/>
        <dbReference type="ChEBI" id="CHEBI:28938"/>
        <dbReference type="ChEBI" id="CHEBI:58000"/>
    </reaction>
    <physiologicalReaction direction="left-to-right" evidence="6">
        <dbReference type="Rhea" id="RHEA:78216"/>
    </physiologicalReaction>
</comment>
<comment type="catalytic activity">
    <reaction evidence="6">
        <text>D-isoleucine + O2 + H2O = (R)-3-methyl-2-oxopentanoate + H2O2 + NH4(+)</text>
        <dbReference type="Rhea" id="RHEA:78235"/>
        <dbReference type="ChEBI" id="CHEBI:15377"/>
        <dbReference type="ChEBI" id="CHEBI:15379"/>
        <dbReference type="ChEBI" id="CHEBI:16240"/>
        <dbReference type="ChEBI" id="CHEBI:28938"/>
        <dbReference type="ChEBI" id="CHEBI:193151"/>
        <dbReference type="ChEBI" id="CHEBI:228255"/>
    </reaction>
    <physiologicalReaction direction="left-to-right" evidence="6">
        <dbReference type="Rhea" id="RHEA:78236"/>
    </physiologicalReaction>
</comment>
<comment type="catalytic activity">
    <reaction evidence="6">
        <text>D-leucine + O2 + H2O = 4-methyl-2-oxopentanoate + H2O2 + NH4(+)</text>
        <dbReference type="Rhea" id="RHEA:78211"/>
        <dbReference type="ChEBI" id="CHEBI:15377"/>
        <dbReference type="ChEBI" id="CHEBI:15379"/>
        <dbReference type="ChEBI" id="CHEBI:16240"/>
        <dbReference type="ChEBI" id="CHEBI:17865"/>
        <dbReference type="ChEBI" id="CHEBI:28938"/>
        <dbReference type="ChEBI" id="CHEBI:143079"/>
    </reaction>
    <physiologicalReaction direction="left-to-right" evidence="6">
        <dbReference type="Rhea" id="RHEA:78212"/>
    </physiologicalReaction>
</comment>
<comment type="catalytic activity">
    <reaction evidence="6">
        <text>D-lysine + O2 + H2O = 6-amino-2-oxohexanoate + H2O2 + NH4(+)</text>
        <dbReference type="Rhea" id="RHEA:37583"/>
        <dbReference type="ChEBI" id="CHEBI:15377"/>
        <dbReference type="ChEBI" id="CHEBI:15379"/>
        <dbReference type="ChEBI" id="CHEBI:16240"/>
        <dbReference type="ChEBI" id="CHEBI:28938"/>
        <dbReference type="ChEBI" id="CHEBI:32557"/>
        <dbReference type="ChEBI" id="CHEBI:58183"/>
        <dbReference type="EC" id="1.4.3.3"/>
    </reaction>
    <physiologicalReaction direction="left-to-right" evidence="6">
        <dbReference type="Rhea" id="RHEA:37584"/>
    </physiologicalReaction>
</comment>
<comment type="catalytic activity">
    <reaction evidence="6">
        <text>D-methionine + O2 + H2O = 4-methylsulfanyl-2-oxobutanoate + H2O2 + NH4(+)</text>
        <dbReference type="Rhea" id="RHEA:78207"/>
        <dbReference type="ChEBI" id="CHEBI:15377"/>
        <dbReference type="ChEBI" id="CHEBI:15379"/>
        <dbReference type="ChEBI" id="CHEBI:16240"/>
        <dbReference type="ChEBI" id="CHEBI:16723"/>
        <dbReference type="ChEBI" id="CHEBI:28938"/>
        <dbReference type="ChEBI" id="CHEBI:57932"/>
    </reaction>
    <physiologicalReaction direction="left-to-right" evidence="6">
        <dbReference type="Rhea" id="RHEA:78208"/>
    </physiologicalReaction>
</comment>
<comment type="catalytic activity">
    <reaction evidence="6">
        <text>D-phenylalanine + O2 + H2O = 3-phenylpyruvate + H2O2 + NH4(+)</text>
        <dbReference type="Rhea" id="RHEA:70963"/>
        <dbReference type="ChEBI" id="CHEBI:15377"/>
        <dbReference type="ChEBI" id="CHEBI:15379"/>
        <dbReference type="ChEBI" id="CHEBI:16240"/>
        <dbReference type="ChEBI" id="CHEBI:18005"/>
        <dbReference type="ChEBI" id="CHEBI:28938"/>
        <dbReference type="ChEBI" id="CHEBI:57981"/>
    </reaction>
    <physiologicalReaction direction="left-to-right" evidence="6">
        <dbReference type="Rhea" id="RHEA:70964"/>
    </physiologicalReaction>
</comment>
<comment type="catalytic activity">
    <reaction evidence="6">
        <text>D-proline + O2 = 1-pyrroline-2-carboxylate + H2O2</text>
        <dbReference type="Rhea" id="RHEA:78259"/>
        <dbReference type="ChEBI" id="CHEBI:15379"/>
        <dbReference type="ChEBI" id="CHEBI:16240"/>
        <dbReference type="ChEBI" id="CHEBI:39785"/>
        <dbReference type="ChEBI" id="CHEBI:57726"/>
    </reaction>
    <physiologicalReaction direction="left-to-right" evidence="6">
        <dbReference type="Rhea" id="RHEA:78260"/>
    </physiologicalReaction>
</comment>
<comment type="catalytic activity">
    <reaction evidence="6">
        <text>D-valine + O2 + H2O = 3-methyl-2-oxobutanoate + H2O2 + NH4(+)</text>
        <dbReference type="Rhea" id="RHEA:78203"/>
        <dbReference type="ChEBI" id="CHEBI:11851"/>
        <dbReference type="ChEBI" id="CHEBI:15377"/>
        <dbReference type="ChEBI" id="CHEBI:15379"/>
        <dbReference type="ChEBI" id="CHEBI:16240"/>
        <dbReference type="ChEBI" id="CHEBI:28938"/>
        <dbReference type="ChEBI" id="CHEBI:74338"/>
    </reaction>
    <physiologicalReaction direction="left-to-right" evidence="6">
        <dbReference type="Rhea" id="RHEA:78204"/>
    </physiologicalReaction>
</comment>
<comment type="catalytic activity">
    <reaction evidence="6">
        <text>D-histidine + O2 + H2O = 3-(imidazol-5-yl)pyruvate + H2O2 + NH4(+)</text>
        <dbReference type="Rhea" id="RHEA:78227"/>
        <dbReference type="ChEBI" id="CHEBI:15377"/>
        <dbReference type="ChEBI" id="CHEBI:15379"/>
        <dbReference type="ChEBI" id="CHEBI:16240"/>
        <dbReference type="ChEBI" id="CHEBI:28938"/>
        <dbReference type="ChEBI" id="CHEBI:58133"/>
        <dbReference type="ChEBI" id="CHEBI:142967"/>
    </reaction>
    <physiologicalReaction direction="left-to-right" evidence="6">
        <dbReference type="Rhea" id="RHEA:78228"/>
    </physiologicalReaction>
</comment>
<comment type="catalytic activity">
    <reaction evidence="6">
        <text>D-tyrosine + O2 + H2O = 3-(4-hydroxyphenyl)pyruvate + H2O2 + NH4(+)</text>
        <dbReference type="Rhea" id="RHEA:70959"/>
        <dbReference type="ChEBI" id="CHEBI:15377"/>
        <dbReference type="ChEBI" id="CHEBI:15379"/>
        <dbReference type="ChEBI" id="CHEBI:16240"/>
        <dbReference type="ChEBI" id="CHEBI:28938"/>
        <dbReference type="ChEBI" id="CHEBI:36242"/>
        <dbReference type="ChEBI" id="CHEBI:58570"/>
    </reaction>
    <physiologicalReaction direction="left-to-right" evidence="6">
        <dbReference type="Rhea" id="RHEA:70960"/>
    </physiologicalReaction>
</comment>
<comment type="catalytic activity">
    <reaction evidence="6">
        <text>D-serine + O2 + H2O = 3-hydroxypyruvate + H2O2 + NH4(+)</text>
        <dbReference type="Rhea" id="RHEA:70951"/>
        <dbReference type="ChEBI" id="CHEBI:15377"/>
        <dbReference type="ChEBI" id="CHEBI:15379"/>
        <dbReference type="ChEBI" id="CHEBI:16240"/>
        <dbReference type="ChEBI" id="CHEBI:17180"/>
        <dbReference type="ChEBI" id="CHEBI:28938"/>
        <dbReference type="ChEBI" id="CHEBI:35247"/>
    </reaction>
    <physiologicalReaction direction="left-to-right" evidence="6">
        <dbReference type="Rhea" id="RHEA:70952"/>
    </physiologicalReaction>
</comment>
<comment type="catalytic activity">
    <reaction evidence="6">
        <text>D-threonine + O2 + H2O = (S)-3-hydroxy-2-oxobutanoate + H2O2 + NH4(+)</text>
        <dbReference type="Rhea" id="RHEA:78251"/>
        <dbReference type="ChEBI" id="CHEBI:15377"/>
        <dbReference type="ChEBI" id="CHEBI:15379"/>
        <dbReference type="ChEBI" id="CHEBI:16240"/>
        <dbReference type="ChEBI" id="CHEBI:28938"/>
        <dbReference type="ChEBI" id="CHEBI:57757"/>
        <dbReference type="ChEBI" id="CHEBI:228256"/>
    </reaction>
    <physiologicalReaction direction="left-to-right" evidence="6">
        <dbReference type="Rhea" id="RHEA:78252"/>
    </physiologicalReaction>
</comment>
<comment type="catalytic activity">
    <reaction evidence="6">
        <text>D-tryptophan + O2 + H2O = indole-3-pyruvate + H2O2 + NH4(+)</text>
        <dbReference type="Rhea" id="RHEA:78247"/>
        <dbReference type="ChEBI" id="CHEBI:15377"/>
        <dbReference type="ChEBI" id="CHEBI:15379"/>
        <dbReference type="ChEBI" id="CHEBI:16240"/>
        <dbReference type="ChEBI" id="CHEBI:17640"/>
        <dbReference type="ChEBI" id="CHEBI:28938"/>
        <dbReference type="ChEBI" id="CHEBI:57719"/>
    </reaction>
    <physiologicalReaction direction="left-to-right" evidence="6">
        <dbReference type="Rhea" id="RHEA:78248"/>
    </physiologicalReaction>
</comment>
<comment type="cofactor">
    <cofactor evidence="5">
        <name>FAD</name>
        <dbReference type="ChEBI" id="CHEBI:57692"/>
    </cofactor>
</comment>
<comment type="subcellular location">
    <subcellularLocation>
        <location evidence="3">Peroxisome matrix</location>
    </subcellularLocation>
</comment>
<comment type="developmental stage">
    <text evidence="6">More highly expressed in asexual worms than sexual worms (PubMed:24434168). Highly expressed in the developing ovaries (PubMed:24434168).</text>
</comment>
<comment type="disruption phenotype">
    <text evidence="6">RNAi-mediated knockdown results in the development of immature ovaries with large numbers of oogonia and also represses the development of testes, yolk glands, and a copulatory apparatus; as a result fewer fully sexual worms are formed.</text>
</comment>
<comment type="similarity">
    <text evidence="8">Belongs to the DAMOX/DASOX family.</text>
</comment>
<keyword id="KW-0217">Developmental protein</keyword>
<keyword id="KW-0274">FAD</keyword>
<keyword id="KW-0285">Flavoprotein</keyword>
<keyword id="KW-0560">Oxidoreductase</keyword>
<keyword id="KW-0576">Peroxisome</keyword>
<dbReference type="EC" id="1.4.3.3" evidence="6"/>
<dbReference type="EMBL" id="AB743584">
    <property type="protein sequence ID" value="BAN78701.1"/>
    <property type="molecule type" value="mRNA"/>
</dbReference>
<dbReference type="SMR" id="T2HG31"/>
<dbReference type="GO" id="GO:0005782">
    <property type="term" value="C:peroxisomal matrix"/>
    <property type="evidence" value="ECO:0007669"/>
    <property type="project" value="UniProtKB-SubCell"/>
</dbReference>
<dbReference type="GO" id="GO:0003884">
    <property type="term" value="F:D-amino-acid oxidase activity"/>
    <property type="evidence" value="ECO:0000314"/>
    <property type="project" value="UniProtKB"/>
</dbReference>
<dbReference type="GO" id="GO:0071949">
    <property type="term" value="F:FAD binding"/>
    <property type="evidence" value="ECO:0007669"/>
    <property type="project" value="InterPro"/>
</dbReference>
<dbReference type="GO" id="GO:0043799">
    <property type="term" value="F:glycine oxidase activity"/>
    <property type="evidence" value="ECO:0007669"/>
    <property type="project" value="RHEA"/>
</dbReference>
<dbReference type="GO" id="GO:0019478">
    <property type="term" value="P:D-amino acid catabolic process"/>
    <property type="evidence" value="ECO:0007669"/>
    <property type="project" value="TreeGrafter"/>
</dbReference>
<dbReference type="GO" id="GO:0048599">
    <property type="term" value="P:oocyte development"/>
    <property type="evidence" value="ECO:0000315"/>
    <property type="project" value="UniProtKB"/>
</dbReference>
<dbReference type="GO" id="GO:1905939">
    <property type="term" value="P:regulation of gonad development"/>
    <property type="evidence" value="ECO:0000315"/>
    <property type="project" value="UniProtKB"/>
</dbReference>
<dbReference type="Gene3D" id="3.30.9.10">
    <property type="entry name" value="D-Amino Acid Oxidase, subunit A, domain 2"/>
    <property type="match status" value="1"/>
</dbReference>
<dbReference type="Gene3D" id="3.40.50.720">
    <property type="entry name" value="NAD(P)-binding Rossmann-like Domain"/>
    <property type="match status" value="1"/>
</dbReference>
<dbReference type="InterPro" id="IPR006181">
    <property type="entry name" value="D-amino_acid_oxidase_CS"/>
</dbReference>
<dbReference type="InterPro" id="IPR023209">
    <property type="entry name" value="DAO"/>
</dbReference>
<dbReference type="InterPro" id="IPR006076">
    <property type="entry name" value="FAD-dep_OxRdtase"/>
</dbReference>
<dbReference type="PANTHER" id="PTHR11530">
    <property type="entry name" value="D-AMINO ACID OXIDASE"/>
    <property type="match status" value="1"/>
</dbReference>
<dbReference type="PANTHER" id="PTHR11530:SF11">
    <property type="entry name" value="D-ASPARTATE OXIDASE"/>
    <property type="match status" value="1"/>
</dbReference>
<dbReference type="Pfam" id="PF01266">
    <property type="entry name" value="DAO"/>
    <property type="match status" value="1"/>
</dbReference>
<dbReference type="PIRSF" id="PIRSF000189">
    <property type="entry name" value="D-aa_oxidase"/>
    <property type="match status" value="1"/>
</dbReference>
<dbReference type="SUPFAM" id="SSF54373">
    <property type="entry name" value="FAD-linked reductases, C-terminal domain"/>
    <property type="match status" value="1"/>
</dbReference>
<dbReference type="SUPFAM" id="SSF51971">
    <property type="entry name" value="Nucleotide-binding domain"/>
    <property type="match status" value="1"/>
</dbReference>
<dbReference type="PROSITE" id="PS00677">
    <property type="entry name" value="DAO"/>
    <property type="match status" value="1"/>
</dbReference>
<reference evidence="9" key="1">
    <citation type="journal article" date="2014" name="Mech. Dev.">
        <title>Planarian D-amino acid oxidase is involved in ovarian development during sexual induction.</title>
        <authorList>
            <person name="Maezawa T."/>
            <person name="Tanaka H."/>
            <person name="Nakagawa H."/>
            <person name="Ono M."/>
            <person name="Aoki M."/>
            <person name="Matsumoto M."/>
            <person name="Ishida T."/>
            <person name="Horiike K."/>
            <person name="Kobayashi K."/>
        </authorList>
    </citation>
    <scope>NUCLEOTIDE SEQUENCE [MRNA]</scope>
    <scope>FUNCTION</scope>
    <scope>CATALYTIC ACTIVITY</scope>
    <scope>DEVELOPMENTAL STAGE</scope>
    <scope>DISRUPTION PHENOTYPE</scope>
    <source>
        <strain evidence="7">OH</strain>
    </source>
</reference>
<sequence>MHIAVIGAGINGISVAVNLLETLPGVKVTIFTHNVTPNTTGDVAAGLFRPYLVAEGDHRIKKWCRSTYNFLENFIATNPKHHKYGCCYLEVFELDTEPLEKTLFNEIVGNSRFLNEFELKRYPTAKYGLASTSIISEGKKILPYFYEKFKMLGGKIKVMQVKNFDEVQMIHNFPIVINCSGLGSRSLCNDMDIYPVRGQIIRIHAPWIKYSFNKAEHYIIPQSDGVVVLGGTTQENNWNTLPDENDTKNILNGCKTILNGLEECNILSVNVGLRPGRKSVRLEKENRTNFTTGNKYTIIHNYGHGGSGFTLFWGCAKDVGQLVSDILLKAKL</sequence>
<protein>
    <recommendedName>
        <fullName evidence="7">D-amino acid oxidase</fullName>
        <shortName evidence="8">DAAO</shortName>
        <shortName evidence="8">DAMOX</shortName>
        <shortName evidence="8">DAO</shortName>
        <ecNumber evidence="6">1.4.3.3</ecNumber>
    </recommendedName>
    <alternativeName>
        <fullName evidence="7">DrDAO</fullName>
    </alternativeName>
</protein>
<proteinExistence type="evidence at protein level"/>
<accession>T2HG31</accession>
<evidence type="ECO:0000250" key="1">
    <source>
        <dbReference type="UniProtKB" id="P00371"/>
    </source>
</evidence>
<evidence type="ECO:0000250" key="2">
    <source>
        <dbReference type="UniProtKB" id="P14920"/>
    </source>
</evidence>
<evidence type="ECO:0000250" key="3">
    <source>
        <dbReference type="UniProtKB" id="Q95XG9"/>
    </source>
</evidence>
<evidence type="ECO:0000255" key="4"/>
<evidence type="ECO:0000255" key="5">
    <source>
        <dbReference type="PIRSR" id="PIRSR000189-1"/>
    </source>
</evidence>
<evidence type="ECO:0000269" key="6">
    <source>
    </source>
</evidence>
<evidence type="ECO:0000303" key="7">
    <source>
    </source>
</evidence>
<evidence type="ECO:0000305" key="8"/>
<evidence type="ECO:0000312" key="9">
    <source>
        <dbReference type="EMBL" id="BAN78701.1"/>
    </source>
</evidence>
<feature type="chain" id="PRO_0000460381" description="D-amino acid oxidase">
    <location>
        <begin position="1"/>
        <end position="332"/>
    </location>
</feature>
<feature type="short sequence motif" description="Microbody targeting signal" evidence="4">
    <location>
        <begin position="330"/>
        <end position="332"/>
    </location>
</feature>
<feature type="binding site" evidence="2">
    <location>
        <position position="8"/>
    </location>
    <ligand>
        <name>FAD</name>
        <dbReference type="ChEBI" id="CHEBI:57692"/>
    </ligand>
</feature>
<feature type="binding site" evidence="2">
    <location>
        <position position="9"/>
    </location>
    <ligand>
        <name>FAD</name>
        <dbReference type="ChEBI" id="CHEBI:57692"/>
    </ligand>
</feature>
<feature type="binding site" evidence="2">
    <location>
        <position position="10"/>
    </location>
    <ligand>
        <name>FAD</name>
        <dbReference type="ChEBI" id="CHEBI:57692"/>
    </ligand>
</feature>
<feature type="binding site" evidence="2">
    <location>
        <position position="39"/>
    </location>
    <ligand>
        <name>FAD</name>
        <dbReference type="ChEBI" id="CHEBI:57692"/>
    </ligand>
</feature>
<feature type="binding site" evidence="2">
    <location>
        <position position="40"/>
    </location>
    <ligand>
        <name>FAD</name>
        <dbReference type="ChEBI" id="CHEBI:57692"/>
    </ligand>
</feature>
<feature type="binding site" evidence="1">
    <location>
        <position position="45"/>
    </location>
    <ligand>
        <name>FAD</name>
        <dbReference type="ChEBI" id="CHEBI:57692"/>
    </ligand>
</feature>
<feature type="binding site" evidence="2">
    <location>
        <position position="46"/>
    </location>
    <ligand>
        <name>FAD</name>
        <dbReference type="ChEBI" id="CHEBI:57692"/>
    </ligand>
</feature>
<feature type="binding site" evidence="2">
    <location>
        <position position="47"/>
    </location>
    <ligand>
        <name>FAD</name>
        <dbReference type="ChEBI" id="CHEBI:57692"/>
    </ligand>
</feature>
<feature type="binding site" evidence="5">
    <location>
        <position position="161"/>
    </location>
    <ligand>
        <name>FAD</name>
        <dbReference type="ChEBI" id="CHEBI:57692"/>
    </ligand>
</feature>
<feature type="binding site" evidence="2">
    <location>
        <position position="180"/>
    </location>
    <ligand>
        <name>FAD</name>
        <dbReference type="ChEBI" id="CHEBI:57692"/>
    </ligand>
</feature>
<feature type="binding site" evidence="1">
    <location>
        <position position="218"/>
    </location>
    <ligand>
        <name>D-proline</name>
        <dbReference type="ChEBI" id="CHEBI:57726"/>
    </ligand>
</feature>
<feature type="binding site" evidence="2">
    <location>
        <position position="218"/>
    </location>
    <ligand>
        <name>D-serine</name>
        <dbReference type="ChEBI" id="CHEBI:35247"/>
    </ligand>
</feature>
<feature type="binding site" evidence="1">
    <location>
        <position position="274"/>
    </location>
    <ligand>
        <name>D-proline</name>
        <dbReference type="ChEBI" id="CHEBI:57726"/>
    </ligand>
</feature>
<feature type="binding site" evidence="2">
    <location>
        <position position="274"/>
    </location>
    <ligand>
        <name>D-serine</name>
        <dbReference type="ChEBI" id="CHEBI:35247"/>
    </ligand>
</feature>
<feature type="binding site" evidence="2">
    <location>
        <position position="274"/>
    </location>
    <ligand>
        <name>FAD</name>
        <dbReference type="ChEBI" id="CHEBI:57692"/>
    </ligand>
</feature>
<feature type="binding site" evidence="2">
    <location>
        <position position="305"/>
    </location>
    <ligand>
        <name>FAD</name>
        <dbReference type="ChEBI" id="CHEBI:57692"/>
    </ligand>
</feature>
<feature type="binding site" evidence="1">
    <location>
        <position position="306"/>
    </location>
    <ligand>
        <name>D-proline</name>
        <dbReference type="ChEBI" id="CHEBI:57726"/>
    </ligand>
</feature>
<feature type="binding site" evidence="2">
    <location>
        <position position="306"/>
    </location>
    <ligand>
        <name>D-serine</name>
        <dbReference type="ChEBI" id="CHEBI:35247"/>
    </ligand>
</feature>
<feature type="binding site" evidence="2">
    <location>
        <position position="306"/>
    </location>
    <ligand>
        <name>FAD</name>
        <dbReference type="ChEBI" id="CHEBI:57692"/>
    </ligand>
</feature>
<feature type="binding site" evidence="2">
    <location>
        <position position="308"/>
    </location>
    <ligand>
        <name>FAD</name>
        <dbReference type="ChEBI" id="CHEBI:57692"/>
    </ligand>
</feature>
<feature type="binding site" evidence="2">
    <location>
        <position position="310"/>
    </location>
    <ligand>
        <name>FAD</name>
        <dbReference type="ChEBI" id="CHEBI:57692"/>
    </ligand>
</feature>